<comment type="subunit">
    <text evidence="1">Microtubule inner protein component of sperm flagellar doublet microtubules.</text>
</comment>
<comment type="interaction">
    <interactant intactId="EBI-10265323">
        <id>Q8N443</id>
    </interactant>
    <interactant intactId="EBI-3923949">
        <id>Q8N8Y2</id>
        <label>ATP6V0D2</label>
    </interactant>
    <organismsDiffer>false</organismsDiffer>
    <experiments>3</experiments>
</comment>
<comment type="interaction">
    <interactant intactId="EBI-10265323">
        <id>Q8N443</id>
    </interactant>
    <interactant intactId="EBI-10193358">
        <id>Q96GS4</id>
        <label>BORCS6</label>
    </interactant>
    <organismsDiffer>false</organismsDiffer>
    <experiments>3</experiments>
</comment>
<comment type="interaction">
    <interactant intactId="EBI-10265323">
        <id>Q8N443</id>
    </interactant>
    <interactant intactId="EBI-395261">
        <id>P24863</id>
        <label>CCNC</label>
    </interactant>
    <organismsDiffer>false</organismsDiffer>
    <experiments>5</experiments>
</comment>
<comment type="interaction">
    <interactant intactId="EBI-10265323">
        <id>Q8N443</id>
    </interactant>
    <interactant intactId="EBI-744586">
        <id>Q9Y6C2</id>
        <label>EMILIN1</label>
    </interactant>
    <organismsDiffer>false</organismsDiffer>
    <experiments>3</experiments>
</comment>
<comment type="interaction">
    <interactant intactId="EBI-10265323">
        <id>Q8N443</id>
    </interactant>
    <interactant intactId="EBI-11748557">
        <id>Q9Y6C2-2</id>
        <label>EMILIN1</label>
    </interactant>
    <organismsDiffer>false</organismsDiffer>
    <experiments>6</experiments>
</comment>
<comment type="interaction">
    <interactant intactId="EBI-10265323">
        <id>Q8N443</id>
    </interactant>
    <interactant intactId="EBI-618309">
        <id>Q08379</id>
        <label>GOLGA2</label>
    </interactant>
    <organismsDiffer>false</organismsDiffer>
    <experiments>3</experiments>
</comment>
<comment type="interaction">
    <interactant intactId="EBI-10265323">
        <id>Q8N443</id>
    </interactant>
    <interactant intactId="EBI-10261098">
        <id>Q86YR5-3</id>
        <label>GPSM1</label>
    </interactant>
    <organismsDiffer>false</organismsDiffer>
    <experiments>3</experiments>
</comment>
<comment type="interaction">
    <interactant intactId="EBI-10265323">
        <id>Q8N443</id>
    </interactant>
    <interactant intactId="EBI-7116203">
        <id>O75031</id>
        <label>HSF2BP</label>
    </interactant>
    <organismsDiffer>false</organismsDiffer>
    <experiments>3</experiments>
</comment>
<comment type="interaction">
    <interactant intactId="EBI-10265323">
        <id>Q8N443</id>
    </interactant>
    <interactant intactId="EBI-739566">
        <id>P19012</id>
        <label>KRT15</label>
    </interactant>
    <organismsDiffer>false</organismsDiffer>
    <experiments>3</experiments>
</comment>
<comment type="interaction">
    <interactant intactId="EBI-10265323">
        <id>Q8N443</id>
    </interactant>
    <interactant intactId="EBI-948001">
        <id>Q15323</id>
        <label>KRT31</label>
    </interactant>
    <organismsDiffer>false</organismsDiffer>
    <experiments>6</experiments>
</comment>
<comment type="interaction">
    <interactant intactId="EBI-10265323">
        <id>Q8N443</id>
    </interactant>
    <interactant intactId="EBI-11958506">
        <id>O76013-2</id>
        <label>KRT36</label>
    </interactant>
    <organismsDiffer>false</organismsDiffer>
    <experiments>3</experiments>
</comment>
<comment type="interaction">
    <interactant intactId="EBI-10265323">
        <id>Q8N443</id>
    </interactant>
    <interactant intactId="EBI-740738">
        <id>O95751</id>
        <label>LDOC1</label>
    </interactant>
    <organismsDiffer>false</organismsDiffer>
    <experiments>3</experiments>
</comment>
<comment type="interaction">
    <interactant intactId="EBI-10265323">
        <id>Q8N443</id>
    </interactant>
    <interactant intactId="EBI-2555085">
        <id>Q8IVT2</id>
        <label>MISP</label>
    </interactant>
    <organismsDiffer>false</organismsDiffer>
    <experiments>3</experiments>
</comment>
<comment type="interaction">
    <interactant intactId="EBI-10265323">
        <id>Q8N443</id>
    </interactant>
    <interactant intactId="EBI-2340269">
        <id>Q13064</id>
        <label>MKRN3</label>
    </interactant>
    <organismsDiffer>false</organismsDiffer>
    <experiments>3</experiments>
</comment>
<comment type="interaction">
    <interactant intactId="EBI-10265323">
        <id>Q8N443</id>
    </interactant>
    <interactant intactId="EBI-2350461">
        <id>Q15777</id>
        <label>MPPED2</label>
    </interactant>
    <organismsDiffer>false</organismsDiffer>
    <experiments>3</experiments>
</comment>
<comment type="interaction">
    <interactant intactId="EBI-10265323">
        <id>Q8N443</id>
    </interactant>
    <interactant intactId="EBI-536879">
        <id>O43482</id>
        <label>OIP5</label>
    </interactant>
    <organismsDiffer>false</organismsDiffer>
    <experiments>3</experiments>
</comment>
<comment type="interaction">
    <interactant intactId="EBI-10265323">
        <id>Q8N443</id>
    </interactant>
    <interactant intactId="EBI-357275">
        <id>Q99471</id>
        <label>PFDN5</label>
    </interactant>
    <organismsDiffer>false</organismsDiffer>
    <experiments>3</experiments>
</comment>
<comment type="interaction">
    <interactant intactId="EBI-10265323">
        <id>Q8N443</id>
    </interactant>
    <interactant intactId="EBI-726876">
        <id>Q6NUQ1</id>
        <label>RINT1</label>
    </interactant>
    <organismsDiffer>false</organismsDiffer>
    <experiments>7</experiments>
</comment>
<comment type="interaction">
    <interactant intactId="EBI-10265323">
        <id>Q8N443</id>
    </interactant>
    <interactant intactId="EBI-12018146">
        <id>Q8IYX1</id>
        <label>TBC1D21</label>
    </interactant>
    <organismsDiffer>false</organismsDiffer>
    <experiments>3</experiments>
</comment>
<comment type="interaction">
    <interactant intactId="EBI-10265323">
        <id>Q8N443</id>
    </interactant>
    <interactant intactId="EBI-742397">
        <id>Q8IYF3</id>
        <label>TEX11</label>
    </interactant>
    <organismsDiffer>false</organismsDiffer>
    <experiments>3</experiments>
</comment>
<comment type="interaction">
    <interactant intactId="EBI-10265323">
        <id>Q8N443</id>
    </interactant>
    <interactant intactId="EBI-11741437">
        <id>Q08117-2</id>
        <label>TLE5</label>
    </interactant>
    <organismsDiffer>false</organismsDiffer>
    <experiments>3</experiments>
</comment>
<comment type="interaction">
    <interactant intactId="EBI-10265323">
        <id>Q8N443</id>
    </interactant>
    <interactant intactId="EBI-12815137">
        <id>Q96NM4-3</id>
        <label>TOX2</label>
    </interactant>
    <organismsDiffer>false</organismsDiffer>
    <experiments>3</experiments>
</comment>
<comment type="interaction">
    <interactant intactId="EBI-10265323">
        <id>Q8N443</id>
    </interactant>
    <interactant intactId="EBI-740098">
        <id>P36406</id>
        <label>TRIM23</label>
    </interactant>
    <organismsDiffer>false</organismsDiffer>
    <experiments>3</experiments>
</comment>
<comment type="interaction">
    <interactant intactId="EBI-10265323">
        <id>Q8N443</id>
    </interactant>
    <interactant intactId="EBI-719493">
        <id>P14373</id>
        <label>TRIM27</label>
    </interactant>
    <organismsDiffer>false</organismsDiffer>
    <experiments>3</experiments>
</comment>
<comment type="interaction">
    <interactant intactId="EBI-10265323">
        <id>Q8N443</id>
    </interactant>
    <interactant intactId="EBI-739895">
        <id>Q8N6Y0</id>
        <label>USHBP1</label>
    </interactant>
    <organismsDiffer>false</organismsDiffer>
    <experiments>3</experiments>
</comment>
<comment type="interaction">
    <interactant intactId="EBI-10265323">
        <id>Q8N443</id>
    </interactant>
    <interactant intactId="EBI-2559305">
        <id>A5D8V6</id>
        <label>VPS37C</label>
    </interactant>
    <organismsDiffer>false</organismsDiffer>
    <experiments>6</experiments>
</comment>
<comment type="subcellular location">
    <subcellularLocation>
        <location evidence="1">Cytoplasm</location>
        <location evidence="1">Cytoskeleton</location>
        <location evidence="1">Flagellum axoneme</location>
    </subcellularLocation>
</comment>
<comment type="alternative products">
    <event type="alternative splicing"/>
    <isoform>
        <id>Q8N443-1</id>
        <name>1</name>
        <sequence type="displayed"/>
    </isoform>
    <isoform>
        <id>Q8N443-2</id>
        <name>2</name>
        <sequence type="described" ref="VSP_021178 VSP_021179"/>
    </isoform>
    <isoform>
        <id>Q8N443-3</id>
        <name>3</name>
        <sequence type="described" ref="VSP_044834 VSP_044835"/>
    </isoform>
</comment>
<comment type="similarity">
    <text evidence="5">Belongs to the RIB43A family.</text>
</comment>
<proteinExistence type="evidence at protein level"/>
<dbReference type="EMBL" id="AK057345">
    <property type="protein sequence ID" value="BAB71438.1"/>
    <property type="molecule type" value="mRNA"/>
</dbReference>
<dbReference type="EMBL" id="AK304179">
    <property type="protein sequence ID" value="BAG65059.1"/>
    <property type="molecule type" value="mRNA"/>
</dbReference>
<dbReference type="EMBL" id="Z97054">
    <property type="protein sequence ID" value="CAI42648.1"/>
    <property type="molecule type" value="Genomic_DNA"/>
</dbReference>
<dbReference type="EMBL" id="Z97054">
    <property type="protein sequence ID" value="CAI42649.1"/>
    <property type="molecule type" value="Genomic_DNA"/>
</dbReference>
<dbReference type="EMBL" id="Z97054">
    <property type="protein sequence ID" value="CAI42650.1"/>
    <property type="molecule type" value="Genomic_DNA"/>
</dbReference>
<dbReference type="EMBL" id="BC036767">
    <property type="protein sequence ID" value="AAH36767.1"/>
    <property type="molecule type" value="mRNA"/>
</dbReference>
<dbReference type="CCDS" id="CCDS14353.1">
    <molecule id="Q8N443-2"/>
</dbReference>
<dbReference type="CCDS" id="CCDS35299.1">
    <molecule id="Q8N443-1"/>
</dbReference>
<dbReference type="CCDS" id="CCDS59168.1">
    <molecule id="Q8N443-3"/>
</dbReference>
<dbReference type="RefSeq" id="NP_001026915.1">
    <molecule id="Q8N443-1"/>
    <property type="nucleotide sequence ID" value="NM_001031745.5"/>
</dbReference>
<dbReference type="RefSeq" id="NP_001253982.1">
    <molecule id="Q8N443-3"/>
    <property type="nucleotide sequence ID" value="NM_001267053.4"/>
</dbReference>
<dbReference type="RefSeq" id="NP_659405.1">
    <molecule id="Q8N443-2"/>
    <property type="nucleotide sequence ID" value="NM_144968.4"/>
</dbReference>
<dbReference type="RefSeq" id="XP_005262045.1">
    <molecule id="Q8N443-1"/>
    <property type="nucleotide sequence ID" value="XM_005261988.5"/>
</dbReference>
<dbReference type="RefSeq" id="XP_054182518.1">
    <molecule id="Q8N443-1"/>
    <property type="nucleotide sequence ID" value="XM_054326543.1"/>
</dbReference>
<dbReference type="PDB" id="8J07">
    <property type="method" value="EM"/>
    <property type="resolution" value="4.10 A"/>
    <property type="chains" value="5D/5E/5F=1-379"/>
</dbReference>
<dbReference type="PDBsum" id="8J07"/>
<dbReference type="EMDB" id="EMD-35888"/>
<dbReference type="SMR" id="Q8N443"/>
<dbReference type="BioGRID" id="127705">
    <property type="interactions" value="61"/>
</dbReference>
<dbReference type="FunCoup" id="Q8N443">
    <property type="interactions" value="47"/>
</dbReference>
<dbReference type="IntAct" id="Q8N443">
    <property type="interactions" value="58"/>
</dbReference>
<dbReference type="STRING" id="9606.ENSP00000364476"/>
<dbReference type="GlyGen" id="Q8N443">
    <property type="glycosylation" value="1 site, 1 O-linked glycan (1 site)"/>
</dbReference>
<dbReference type="iPTMnet" id="Q8N443"/>
<dbReference type="PhosphoSitePlus" id="Q8N443"/>
<dbReference type="BioMuta" id="RIBC1"/>
<dbReference type="DMDM" id="74762522"/>
<dbReference type="MassIVE" id="Q8N443"/>
<dbReference type="PaxDb" id="9606-ENSP00000364476"/>
<dbReference type="PeptideAtlas" id="Q8N443"/>
<dbReference type="ProteomicsDB" id="19746"/>
<dbReference type="ProteomicsDB" id="71881">
    <molecule id="Q8N443-1"/>
</dbReference>
<dbReference type="ProteomicsDB" id="71882">
    <molecule id="Q8N443-2"/>
</dbReference>
<dbReference type="Antibodypedia" id="12543">
    <property type="antibodies" value="52 antibodies from 14 providers"/>
</dbReference>
<dbReference type="DNASU" id="158787"/>
<dbReference type="Ensembl" id="ENST00000375327.6">
    <molecule id="Q8N443-1"/>
    <property type="protein sequence ID" value="ENSP00000364476.3"/>
    <property type="gene ID" value="ENSG00000158423.17"/>
</dbReference>
<dbReference type="Ensembl" id="ENST00000414955.6">
    <molecule id="Q8N443-3"/>
    <property type="protein sequence ID" value="ENSP00000401463.2"/>
    <property type="gene ID" value="ENSG00000158423.17"/>
</dbReference>
<dbReference type="Ensembl" id="ENST00000457095.5">
    <molecule id="Q8N443-2"/>
    <property type="protein sequence ID" value="ENSP00000402080.1"/>
    <property type="gene ID" value="ENSG00000158423.17"/>
</dbReference>
<dbReference type="GeneID" id="158787"/>
<dbReference type="KEGG" id="hsa:158787"/>
<dbReference type="MANE-Select" id="ENST00000375327.6">
    <property type="protein sequence ID" value="ENSP00000364476.3"/>
    <property type="RefSeq nucleotide sequence ID" value="NM_001031745.5"/>
    <property type="RefSeq protein sequence ID" value="NP_001026915.1"/>
</dbReference>
<dbReference type="UCSC" id="uc004dsj.3">
    <molecule id="Q8N443-1"/>
    <property type="organism name" value="human"/>
</dbReference>
<dbReference type="AGR" id="HGNC:26537"/>
<dbReference type="CTD" id="158787"/>
<dbReference type="DisGeNET" id="158787"/>
<dbReference type="GeneCards" id="RIBC1"/>
<dbReference type="HGNC" id="HGNC:26537">
    <property type="gene designation" value="RIBC1"/>
</dbReference>
<dbReference type="HPA" id="ENSG00000158423">
    <property type="expression patterns" value="Group enriched (choroid plexus, fallopian tube, retina, testis)"/>
</dbReference>
<dbReference type="MalaCards" id="RIBC1"/>
<dbReference type="neXtProt" id="NX_Q8N443"/>
<dbReference type="OpenTargets" id="ENSG00000158423"/>
<dbReference type="PharmGKB" id="PA134903330"/>
<dbReference type="VEuPathDB" id="HostDB:ENSG00000158423"/>
<dbReference type="eggNOG" id="ENOG502QWST">
    <property type="taxonomic scope" value="Eukaryota"/>
</dbReference>
<dbReference type="GeneTree" id="ENSGT00390000010825"/>
<dbReference type="HOGENOM" id="CLU_061822_0_0_1"/>
<dbReference type="InParanoid" id="Q8N443"/>
<dbReference type="OMA" id="CLKMQQE"/>
<dbReference type="OrthoDB" id="429119at2759"/>
<dbReference type="PAN-GO" id="Q8N443">
    <property type="GO annotations" value="0 GO annotations based on evolutionary models"/>
</dbReference>
<dbReference type="PhylomeDB" id="Q8N443"/>
<dbReference type="TreeFam" id="TF324120"/>
<dbReference type="PathwayCommons" id="Q8N443"/>
<dbReference type="SignaLink" id="Q8N443"/>
<dbReference type="BioGRID-ORCS" id="158787">
    <property type="hits" value="8 hits in 768 CRISPR screens"/>
</dbReference>
<dbReference type="ChiTaRS" id="RIBC1">
    <property type="organism name" value="human"/>
</dbReference>
<dbReference type="GenomeRNAi" id="158787"/>
<dbReference type="Pharos" id="Q8N443">
    <property type="development level" value="Tdark"/>
</dbReference>
<dbReference type="PRO" id="PR:Q8N443"/>
<dbReference type="Proteomes" id="UP000005640">
    <property type="component" value="Chromosome X"/>
</dbReference>
<dbReference type="RNAct" id="Q8N443">
    <property type="molecule type" value="protein"/>
</dbReference>
<dbReference type="Bgee" id="ENSG00000158423">
    <property type="expression patterns" value="Expressed in right uterine tube and 103 other cell types or tissues"/>
</dbReference>
<dbReference type="ExpressionAtlas" id="Q8N443">
    <property type="expression patterns" value="baseline and differential"/>
</dbReference>
<dbReference type="GO" id="GO:0160111">
    <property type="term" value="C:axonemal A tubule inner sheath"/>
    <property type="evidence" value="ECO:0000250"/>
    <property type="project" value="UniProtKB"/>
</dbReference>
<dbReference type="GO" id="GO:0036126">
    <property type="term" value="C:sperm flagellum"/>
    <property type="evidence" value="ECO:0000250"/>
    <property type="project" value="UniProtKB"/>
</dbReference>
<dbReference type="GO" id="GO:0030317">
    <property type="term" value="P:flagellated sperm motility"/>
    <property type="evidence" value="ECO:0000250"/>
    <property type="project" value="UniProtKB"/>
</dbReference>
<dbReference type="InterPro" id="IPR008805">
    <property type="entry name" value="RIB43A"/>
</dbReference>
<dbReference type="PANTHER" id="PTHR14517:SF11">
    <property type="entry name" value="RIB43A-LIKE WITH COILED-COILS PROTEIN 1"/>
    <property type="match status" value="1"/>
</dbReference>
<dbReference type="PANTHER" id="PTHR14517">
    <property type="entry name" value="RIB43A-RELATED"/>
    <property type="match status" value="1"/>
</dbReference>
<dbReference type="Pfam" id="PF05914">
    <property type="entry name" value="RIB43A"/>
    <property type="match status" value="1"/>
</dbReference>
<name>RIBC1_HUMAN</name>
<gene>
    <name type="primary">RIBC1</name>
</gene>
<keyword id="KW-0002">3D-structure</keyword>
<keyword id="KW-0025">Alternative splicing</keyword>
<keyword id="KW-0966">Cell projection</keyword>
<keyword id="KW-0969">Cilium</keyword>
<keyword id="KW-0175">Coiled coil</keyword>
<keyword id="KW-0963">Cytoplasm</keyword>
<keyword id="KW-0206">Cytoskeleton</keyword>
<keyword id="KW-0282">Flagellum</keyword>
<keyword id="KW-1267">Proteomics identification</keyword>
<keyword id="KW-1185">Reference proteome</keyword>
<accession>Q8N443</accession>
<accession>B4E297</accession>
<accession>E9PDU2</accession>
<accession>Q5H931</accession>
<accession>Q96A80</accession>
<sequence length="379" mass="44015">MYNIKQSTDTKEAAAIEARRNREKERQNRFFNVRNRVMGVDVQALNNQVGDRKRREAAERSKEAAYGTSQVQYDVVVQMLEKEEADRTRQLAKKVQEFREQKQQLKNGREFSLWDPGQVWKGLPTYLSYSNTYPGPASLQYFSGEDLDRDTRLRMQQGQFRYNLERQQQEQQQAKVDENYTDALSNQLRLAMDAQATHLARLEESCRAAMMCAMANANKAQAAVQAGRQRCERQREQKANLAEIQHQSTSDLLTENPQVAQHPMAPYRVLPYCWKGMTPEQQAAIRKEQEVQRSKKQAHRQAEKTLDTEWKSQTMSSAQAVLELEEQERELCAVFQRGLGSFNQQLANEQKAQQDYLNSVIYTNQPTAQYHQQFNTSSR</sequence>
<protein>
    <recommendedName>
        <fullName>RIB43A-like with coiled-coils protein 1</fullName>
    </recommendedName>
</protein>
<feature type="chain" id="PRO_0000254093" description="RIB43A-like with coiled-coils protein 1">
    <location>
        <begin position="1"/>
        <end position="379"/>
    </location>
</feature>
<feature type="region of interest" description="Disordered" evidence="3">
    <location>
        <begin position="1"/>
        <end position="21"/>
    </location>
</feature>
<feature type="coiled-coil region" evidence="2">
    <location>
        <begin position="82"/>
        <end position="111"/>
    </location>
</feature>
<feature type="coiled-coil region" evidence="2">
    <location>
        <begin position="216"/>
        <end position="304"/>
    </location>
</feature>
<feature type="compositionally biased region" description="Basic and acidic residues" evidence="3">
    <location>
        <begin position="8"/>
        <end position="21"/>
    </location>
</feature>
<feature type="splice variant" id="VSP_044834" description="In isoform 3." evidence="4">
    <location>
        <begin position="67"/>
        <end position="181"/>
    </location>
</feature>
<feature type="splice variant" id="VSP_021178" description="In isoform 2." evidence="4">
    <original>DALSNQLRLAM</original>
    <variation>GKQPGPPDSET</variation>
    <location>
        <begin position="182"/>
        <end position="192"/>
    </location>
</feature>
<feature type="splice variant" id="VSP_021179" description="In isoform 2." evidence="4">
    <location>
        <begin position="193"/>
        <end position="379"/>
    </location>
</feature>
<feature type="splice variant" id="VSP_044835" description="In isoform 3." evidence="4">
    <location>
        <begin position="354"/>
        <end position="379"/>
    </location>
</feature>
<feature type="sequence conflict" description="In Ref. 1; BAG65059." evidence="5" ref="1">
    <original>Y</original>
    <variation>C</variation>
    <location>
        <position position="66"/>
    </location>
</feature>
<evidence type="ECO:0000250" key="1">
    <source>
        <dbReference type="UniProtKB" id="Q9D0B8"/>
    </source>
</evidence>
<evidence type="ECO:0000255" key="2"/>
<evidence type="ECO:0000256" key="3">
    <source>
        <dbReference type="SAM" id="MobiDB-lite"/>
    </source>
</evidence>
<evidence type="ECO:0000303" key="4">
    <source>
    </source>
</evidence>
<evidence type="ECO:0000305" key="5"/>
<organism>
    <name type="scientific">Homo sapiens</name>
    <name type="common">Human</name>
    <dbReference type="NCBI Taxonomy" id="9606"/>
    <lineage>
        <taxon>Eukaryota</taxon>
        <taxon>Metazoa</taxon>
        <taxon>Chordata</taxon>
        <taxon>Craniata</taxon>
        <taxon>Vertebrata</taxon>
        <taxon>Euteleostomi</taxon>
        <taxon>Mammalia</taxon>
        <taxon>Eutheria</taxon>
        <taxon>Euarchontoglires</taxon>
        <taxon>Primates</taxon>
        <taxon>Haplorrhini</taxon>
        <taxon>Catarrhini</taxon>
        <taxon>Hominidae</taxon>
        <taxon>Homo</taxon>
    </lineage>
</organism>
<reference key="1">
    <citation type="journal article" date="2004" name="Nat. Genet.">
        <title>Complete sequencing and characterization of 21,243 full-length human cDNAs.</title>
        <authorList>
            <person name="Ota T."/>
            <person name="Suzuki Y."/>
            <person name="Nishikawa T."/>
            <person name="Otsuki T."/>
            <person name="Sugiyama T."/>
            <person name="Irie R."/>
            <person name="Wakamatsu A."/>
            <person name="Hayashi K."/>
            <person name="Sato H."/>
            <person name="Nagai K."/>
            <person name="Kimura K."/>
            <person name="Makita H."/>
            <person name="Sekine M."/>
            <person name="Obayashi M."/>
            <person name="Nishi T."/>
            <person name="Shibahara T."/>
            <person name="Tanaka T."/>
            <person name="Ishii S."/>
            <person name="Yamamoto J."/>
            <person name="Saito K."/>
            <person name="Kawai Y."/>
            <person name="Isono Y."/>
            <person name="Nakamura Y."/>
            <person name="Nagahari K."/>
            <person name="Murakami K."/>
            <person name="Yasuda T."/>
            <person name="Iwayanagi T."/>
            <person name="Wagatsuma M."/>
            <person name="Shiratori A."/>
            <person name="Sudo H."/>
            <person name="Hosoiri T."/>
            <person name="Kaku Y."/>
            <person name="Kodaira H."/>
            <person name="Kondo H."/>
            <person name="Sugawara M."/>
            <person name="Takahashi M."/>
            <person name="Kanda K."/>
            <person name="Yokoi T."/>
            <person name="Furuya T."/>
            <person name="Kikkawa E."/>
            <person name="Omura Y."/>
            <person name="Abe K."/>
            <person name="Kamihara K."/>
            <person name="Katsuta N."/>
            <person name="Sato K."/>
            <person name="Tanikawa M."/>
            <person name="Yamazaki M."/>
            <person name="Ninomiya K."/>
            <person name="Ishibashi T."/>
            <person name="Yamashita H."/>
            <person name="Murakawa K."/>
            <person name="Fujimori K."/>
            <person name="Tanai H."/>
            <person name="Kimata M."/>
            <person name="Watanabe M."/>
            <person name="Hiraoka S."/>
            <person name="Chiba Y."/>
            <person name="Ishida S."/>
            <person name="Ono Y."/>
            <person name="Takiguchi S."/>
            <person name="Watanabe S."/>
            <person name="Yosida M."/>
            <person name="Hotuta T."/>
            <person name="Kusano J."/>
            <person name="Kanehori K."/>
            <person name="Takahashi-Fujii A."/>
            <person name="Hara H."/>
            <person name="Tanase T.-O."/>
            <person name="Nomura Y."/>
            <person name="Togiya S."/>
            <person name="Komai F."/>
            <person name="Hara R."/>
            <person name="Takeuchi K."/>
            <person name="Arita M."/>
            <person name="Imose N."/>
            <person name="Musashino K."/>
            <person name="Yuuki H."/>
            <person name="Oshima A."/>
            <person name="Sasaki N."/>
            <person name="Aotsuka S."/>
            <person name="Yoshikawa Y."/>
            <person name="Matsunawa H."/>
            <person name="Ichihara T."/>
            <person name="Shiohata N."/>
            <person name="Sano S."/>
            <person name="Moriya S."/>
            <person name="Momiyama H."/>
            <person name="Satoh N."/>
            <person name="Takami S."/>
            <person name="Terashima Y."/>
            <person name="Suzuki O."/>
            <person name="Nakagawa S."/>
            <person name="Senoh A."/>
            <person name="Mizoguchi H."/>
            <person name="Goto Y."/>
            <person name="Shimizu F."/>
            <person name="Wakebe H."/>
            <person name="Hishigaki H."/>
            <person name="Watanabe T."/>
            <person name="Sugiyama A."/>
            <person name="Takemoto M."/>
            <person name="Kawakami B."/>
            <person name="Yamazaki M."/>
            <person name="Watanabe K."/>
            <person name="Kumagai A."/>
            <person name="Itakura S."/>
            <person name="Fukuzumi Y."/>
            <person name="Fujimori Y."/>
            <person name="Komiyama M."/>
            <person name="Tashiro H."/>
            <person name="Tanigami A."/>
            <person name="Fujiwara T."/>
            <person name="Ono T."/>
            <person name="Yamada K."/>
            <person name="Fujii Y."/>
            <person name="Ozaki K."/>
            <person name="Hirao M."/>
            <person name="Ohmori Y."/>
            <person name="Kawabata A."/>
            <person name="Hikiji T."/>
            <person name="Kobatake N."/>
            <person name="Inagaki H."/>
            <person name="Ikema Y."/>
            <person name="Okamoto S."/>
            <person name="Okitani R."/>
            <person name="Kawakami T."/>
            <person name="Noguchi S."/>
            <person name="Itoh T."/>
            <person name="Shigeta K."/>
            <person name="Senba T."/>
            <person name="Matsumura K."/>
            <person name="Nakajima Y."/>
            <person name="Mizuno T."/>
            <person name="Morinaga M."/>
            <person name="Sasaki M."/>
            <person name="Togashi T."/>
            <person name="Oyama M."/>
            <person name="Hata H."/>
            <person name="Watanabe M."/>
            <person name="Komatsu T."/>
            <person name="Mizushima-Sugano J."/>
            <person name="Satoh T."/>
            <person name="Shirai Y."/>
            <person name="Takahashi Y."/>
            <person name="Nakagawa K."/>
            <person name="Okumura K."/>
            <person name="Nagase T."/>
            <person name="Nomura N."/>
            <person name="Kikuchi H."/>
            <person name="Masuho Y."/>
            <person name="Yamashita R."/>
            <person name="Nakai K."/>
            <person name="Yada T."/>
            <person name="Nakamura Y."/>
            <person name="Ohara O."/>
            <person name="Isogai T."/>
            <person name="Sugano S."/>
        </authorList>
    </citation>
    <scope>NUCLEOTIDE SEQUENCE [LARGE SCALE MRNA] (ISOFORMS 2 AND 3)</scope>
    <source>
        <tissue>Testis</tissue>
        <tissue>Trachea</tissue>
    </source>
</reference>
<reference key="2">
    <citation type="journal article" date="2005" name="Nature">
        <title>The DNA sequence of the human X chromosome.</title>
        <authorList>
            <person name="Ross M.T."/>
            <person name="Grafham D.V."/>
            <person name="Coffey A.J."/>
            <person name="Scherer S."/>
            <person name="McLay K."/>
            <person name="Muzny D."/>
            <person name="Platzer M."/>
            <person name="Howell G.R."/>
            <person name="Burrows C."/>
            <person name="Bird C.P."/>
            <person name="Frankish A."/>
            <person name="Lovell F.L."/>
            <person name="Howe K.L."/>
            <person name="Ashurst J.L."/>
            <person name="Fulton R.S."/>
            <person name="Sudbrak R."/>
            <person name="Wen G."/>
            <person name="Jones M.C."/>
            <person name="Hurles M.E."/>
            <person name="Andrews T.D."/>
            <person name="Scott C.E."/>
            <person name="Searle S."/>
            <person name="Ramser J."/>
            <person name="Whittaker A."/>
            <person name="Deadman R."/>
            <person name="Carter N.P."/>
            <person name="Hunt S.E."/>
            <person name="Chen R."/>
            <person name="Cree A."/>
            <person name="Gunaratne P."/>
            <person name="Havlak P."/>
            <person name="Hodgson A."/>
            <person name="Metzker M.L."/>
            <person name="Richards S."/>
            <person name="Scott G."/>
            <person name="Steffen D."/>
            <person name="Sodergren E."/>
            <person name="Wheeler D.A."/>
            <person name="Worley K.C."/>
            <person name="Ainscough R."/>
            <person name="Ambrose K.D."/>
            <person name="Ansari-Lari M.A."/>
            <person name="Aradhya S."/>
            <person name="Ashwell R.I."/>
            <person name="Babbage A.K."/>
            <person name="Bagguley C.L."/>
            <person name="Ballabio A."/>
            <person name="Banerjee R."/>
            <person name="Barker G.E."/>
            <person name="Barlow K.F."/>
            <person name="Barrett I.P."/>
            <person name="Bates K.N."/>
            <person name="Beare D.M."/>
            <person name="Beasley H."/>
            <person name="Beasley O."/>
            <person name="Beck A."/>
            <person name="Bethel G."/>
            <person name="Blechschmidt K."/>
            <person name="Brady N."/>
            <person name="Bray-Allen S."/>
            <person name="Bridgeman A.M."/>
            <person name="Brown A.J."/>
            <person name="Brown M.J."/>
            <person name="Bonnin D."/>
            <person name="Bruford E.A."/>
            <person name="Buhay C."/>
            <person name="Burch P."/>
            <person name="Burford D."/>
            <person name="Burgess J."/>
            <person name="Burrill W."/>
            <person name="Burton J."/>
            <person name="Bye J.M."/>
            <person name="Carder C."/>
            <person name="Carrel L."/>
            <person name="Chako J."/>
            <person name="Chapman J.C."/>
            <person name="Chavez D."/>
            <person name="Chen E."/>
            <person name="Chen G."/>
            <person name="Chen Y."/>
            <person name="Chen Z."/>
            <person name="Chinault C."/>
            <person name="Ciccodicola A."/>
            <person name="Clark S.Y."/>
            <person name="Clarke G."/>
            <person name="Clee C.M."/>
            <person name="Clegg S."/>
            <person name="Clerc-Blankenburg K."/>
            <person name="Clifford K."/>
            <person name="Cobley V."/>
            <person name="Cole C.G."/>
            <person name="Conquer J.S."/>
            <person name="Corby N."/>
            <person name="Connor R.E."/>
            <person name="David R."/>
            <person name="Davies J."/>
            <person name="Davis C."/>
            <person name="Davis J."/>
            <person name="Delgado O."/>
            <person name="Deshazo D."/>
            <person name="Dhami P."/>
            <person name="Ding Y."/>
            <person name="Dinh H."/>
            <person name="Dodsworth S."/>
            <person name="Draper H."/>
            <person name="Dugan-Rocha S."/>
            <person name="Dunham A."/>
            <person name="Dunn M."/>
            <person name="Durbin K.J."/>
            <person name="Dutta I."/>
            <person name="Eades T."/>
            <person name="Ellwood M."/>
            <person name="Emery-Cohen A."/>
            <person name="Errington H."/>
            <person name="Evans K.L."/>
            <person name="Faulkner L."/>
            <person name="Francis F."/>
            <person name="Frankland J."/>
            <person name="Fraser A.E."/>
            <person name="Galgoczy P."/>
            <person name="Gilbert J."/>
            <person name="Gill R."/>
            <person name="Gloeckner G."/>
            <person name="Gregory S.G."/>
            <person name="Gribble S."/>
            <person name="Griffiths C."/>
            <person name="Grocock R."/>
            <person name="Gu Y."/>
            <person name="Gwilliam R."/>
            <person name="Hamilton C."/>
            <person name="Hart E.A."/>
            <person name="Hawes A."/>
            <person name="Heath P.D."/>
            <person name="Heitmann K."/>
            <person name="Hennig S."/>
            <person name="Hernandez J."/>
            <person name="Hinzmann B."/>
            <person name="Ho S."/>
            <person name="Hoffs M."/>
            <person name="Howden P.J."/>
            <person name="Huckle E.J."/>
            <person name="Hume J."/>
            <person name="Hunt P.J."/>
            <person name="Hunt A.R."/>
            <person name="Isherwood J."/>
            <person name="Jacob L."/>
            <person name="Johnson D."/>
            <person name="Jones S."/>
            <person name="de Jong P.J."/>
            <person name="Joseph S.S."/>
            <person name="Keenan S."/>
            <person name="Kelly S."/>
            <person name="Kershaw J.K."/>
            <person name="Khan Z."/>
            <person name="Kioschis P."/>
            <person name="Klages S."/>
            <person name="Knights A.J."/>
            <person name="Kosiura A."/>
            <person name="Kovar-Smith C."/>
            <person name="Laird G.K."/>
            <person name="Langford C."/>
            <person name="Lawlor S."/>
            <person name="Leversha M."/>
            <person name="Lewis L."/>
            <person name="Liu W."/>
            <person name="Lloyd C."/>
            <person name="Lloyd D.M."/>
            <person name="Loulseged H."/>
            <person name="Loveland J.E."/>
            <person name="Lovell J.D."/>
            <person name="Lozado R."/>
            <person name="Lu J."/>
            <person name="Lyne R."/>
            <person name="Ma J."/>
            <person name="Maheshwari M."/>
            <person name="Matthews L.H."/>
            <person name="McDowall J."/>
            <person name="McLaren S."/>
            <person name="McMurray A."/>
            <person name="Meidl P."/>
            <person name="Meitinger T."/>
            <person name="Milne S."/>
            <person name="Miner G."/>
            <person name="Mistry S.L."/>
            <person name="Morgan M."/>
            <person name="Morris S."/>
            <person name="Mueller I."/>
            <person name="Mullikin J.C."/>
            <person name="Nguyen N."/>
            <person name="Nordsiek G."/>
            <person name="Nyakatura G."/>
            <person name="O'dell C.N."/>
            <person name="Okwuonu G."/>
            <person name="Palmer S."/>
            <person name="Pandian R."/>
            <person name="Parker D."/>
            <person name="Parrish J."/>
            <person name="Pasternak S."/>
            <person name="Patel D."/>
            <person name="Pearce A.V."/>
            <person name="Pearson D.M."/>
            <person name="Pelan S.E."/>
            <person name="Perez L."/>
            <person name="Porter K.M."/>
            <person name="Ramsey Y."/>
            <person name="Reichwald K."/>
            <person name="Rhodes S."/>
            <person name="Ridler K.A."/>
            <person name="Schlessinger D."/>
            <person name="Schueler M.G."/>
            <person name="Sehra H.K."/>
            <person name="Shaw-Smith C."/>
            <person name="Shen H."/>
            <person name="Sheridan E.M."/>
            <person name="Shownkeen R."/>
            <person name="Skuce C.D."/>
            <person name="Smith M.L."/>
            <person name="Sotheran E.C."/>
            <person name="Steingruber H.E."/>
            <person name="Steward C.A."/>
            <person name="Storey R."/>
            <person name="Swann R.M."/>
            <person name="Swarbreck D."/>
            <person name="Tabor P.E."/>
            <person name="Taudien S."/>
            <person name="Taylor T."/>
            <person name="Teague B."/>
            <person name="Thomas K."/>
            <person name="Thorpe A."/>
            <person name="Timms K."/>
            <person name="Tracey A."/>
            <person name="Trevanion S."/>
            <person name="Tromans A.C."/>
            <person name="d'Urso M."/>
            <person name="Verduzco D."/>
            <person name="Villasana D."/>
            <person name="Waldron L."/>
            <person name="Wall M."/>
            <person name="Wang Q."/>
            <person name="Warren J."/>
            <person name="Warry G.L."/>
            <person name="Wei X."/>
            <person name="West A."/>
            <person name="Whitehead S.L."/>
            <person name="Whiteley M.N."/>
            <person name="Wilkinson J.E."/>
            <person name="Willey D.L."/>
            <person name="Williams G."/>
            <person name="Williams L."/>
            <person name="Williamson A."/>
            <person name="Williamson H."/>
            <person name="Wilming L."/>
            <person name="Woodmansey R.L."/>
            <person name="Wray P.W."/>
            <person name="Yen J."/>
            <person name="Zhang J."/>
            <person name="Zhou J."/>
            <person name="Zoghbi H."/>
            <person name="Zorilla S."/>
            <person name="Buck D."/>
            <person name="Reinhardt R."/>
            <person name="Poustka A."/>
            <person name="Rosenthal A."/>
            <person name="Lehrach H."/>
            <person name="Meindl A."/>
            <person name="Minx P.J."/>
            <person name="Hillier L.W."/>
            <person name="Willard H.F."/>
            <person name="Wilson R.K."/>
            <person name="Waterston R.H."/>
            <person name="Rice C.M."/>
            <person name="Vaudin M."/>
            <person name="Coulson A."/>
            <person name="Nelson D.L."/>
            <person name="Weinstock G."/>
            <person name="Sulston J.E."/>
            <person name="Durbin R.M."/>
            <person name="Hubbard T."/>
            <person name="Gibbs R.A."/>
            <person name="Beck S."/>
            <person name="Rogers J."/>
            <person name="Bentley D.R."/>
        </authorList>
    </citation>
    <scope>NUCLEOTIDE SEQUENCE [LARGE SCALE GENOMIC DNA]</scope>
</reference>
<reference key="3">
    <citation type="journal article" date="2004" name="Genome Res.">
        <title>The status, quality, and expansion of the NIH full-length cDNA project: the Mammalian Gene Collection (MGC).</title>
        <authorList>
            <consortium name="The MGC Project Team"/>
        </authorList>
    </citation>
    <scope>NUCLEOTIDE SEQUENCE [LARGE SCALE MRNA] (ISOFORM 1)</scope>
    <source>
        <tissue>Brain</tissue>
    </source>
</reference>